<feature type="chain" id="PRO_0000314066" description="Pregnancy-associated glycoprotein 50F">
    <location>
        <begin position="1"/>
        <end position="8" status="greater than"/>
    </location>
</feature>
<feature type="non-terminal residue" evidence="3">
    <location>
        <position position="8"/>
    </location>
</feature>
<accession>P85324</accession>
<reference key="1">
    <citation type="journal article" date="2009" name="Anim. Reprod. Sci.">
        <title>Identification of multiple pregnancy-associated glycoproteins (PAGs) purified from the European bison (Eb; Bison bonasus L.) placentas.</title>
        <authorList>
            <person name="Kiewisz J."/>
            <person name="Melo de Sousa N."/>
            <person name="Beckers J.-F.M.P."/>
            <person name="Panasiewicz G."/>
            <person name="Gizejewski Z."/>
            <person name="Szafranska B."/>
        </authorList>
    </citation>
    <scope>PROTEIN SEQUENCE</scope>
    <scope>TISSUE SPECIFICITY</scope>
    <scope>DEVELOPMENTAL STAGE</scope>
    <scope>GLYCOSYLATION</scope>
    <source>
        <tissue>Placenta</tissue>
    </source>
</reference>
<evidence type="ECO:0000255" key="1"/>
<evidence type="ECO:0000269" key="2">
    <source>
    </source>
</evidence>
<evidence type="ECO:0000303" key="3">
    <source>
    </source>
</evidence>
<evidence type="ECO:0000305" key="4"/>
<sequence length="8" mass="847">SQISLRGS</sequence>
<name>PA50F_BISBO</name>
<protein>
    <recommendedName>
        <fullName>Pregnancy-associated glycoprotein 50F</fullName>
        <ecNumber>3.4.23.-</ecNumber>
    </recommendedName>
    <alternativeName>
        <fullName>EbPAG-F 50 kDa</fullName>
    </alternativeName>
</protein>
<keyword id="KW-0064">Aspartyl protease</keyword>
<keyword id="KW-0903">Direct protein sequencing</keyword>
<keyword id="KW-0325">Glycoprotein</keyword>
<keyword id="KW-0378">Hydrolase</keyword>
<keyword id="KW-0645">Protease</keyword>
<keyword id="KW-0964">Secreted</keyword>
<comment type="subcellular location">
    <subcellularLocation>
        <location evidence="4">Secreted</location>
        <location evidence="4">Extracellular space</location>
    </subcellularLocation>
</comment>
<comment type="tissue specificity">
    <text evidence="2">Chorionic epithelium (trophectoderm) and placental cotyledons.</text>
</comment>
<comment type="developmental stage">
    <text evidence="2">Expressed at 60 dpc.</text>
</comment>
<comment type="PTM">
    <text evidence="2">Glycosylated.</text>
</comment>
<comment type="miscellaneous">
    <text evidence="2">On the 2D-gel the determined pI of this protein is: 4.7, its MW is: 50 kDa.</text>
</comment>
<comment type="similarity">
    <text evidence="1">Belongs to the peptidase A1 family.</text>
</comment>
<proteinExistence type="evidence at protein level"/>
<dbReference type="EC" id="3.4.23.-"/>
<dbReference type="GO" id="GO:0005576">
    <property type="term" value="C:extracellular region"/>
    <property type="evidence" value="ECO:0007669"/>
    <property type="project" value="UniProtKB-SubCell"/>
</dbReference>
<dbReference type="GO" id="GO:0004190">
    <property type="term" value="F:aspartic-type endopeptidase activity"/>
    <property type="evidence" value="ECO:0007669"/>
    <property type="project" value="UniProtKB-KW"/>
</dbReference>
<dbReference type="GO" id="GO:0006508">
    <property type="term" value="P:proteolysis"/>
    <property type="evidence" value="ECO:0007669"/>
    <property type="project" value="UniProtKB-KW"/>
</dbReference>
<organism>
    <name type="scientific">Bison bonasus</name>
    <name type="common">European bison</name>
    <dbReference type="NCBI Taxonomy" id="9902"/>
    <lineage>
        <taxon>Eukaryota</taxon>
        <taxon>Metazoa</taxon>
        <taxon>Chordata</taxon>
        <taxon>Craniata</taxon>
        <taxon>Vertebrata</taxon>
        <taxon>Euteleostomi</taxon>
        <taxon>Mammalia</taxon>
        <taxon>Eutheria</taxon>
        <taxon>Laurasiatheria</taxon>
        <taxon>Artiodactyla</taxon>
        <taxon>Ruminantia</taxon>
        <taxon>Pecora</taxon>
        <taxon>Bovidae</taxon>
        <taxon>Bovinae</taxon>
        <taxon>Bison</taxon>
    </lineage>
</organism>